<evidence type="ECO:0000250" key="1">
    <source>
        <dbReference type="UniProtKB" id="P03314"/>
    </source>
</evidence>
<evidence type="ECO:0000250" key="2">
    <source>
        <dbReference type="UniProtKB" id="P06935"/>
    </source>
</evidence>
<evidence type="ECO:0000250" key="3">
    <source>
        <dbReference type="UniProtKB" id="P14335"/>
    </source>
</evidence>
<evidence type="ECO:0000250" key="4">
    <source>
        <dbReference type="UniProtKB" id="P14336"/>
    </source>
</evidence>
<evidence type="ECO:0000250" key="5">
    <source>
        <dbReference type="UniProtKB" id="P17763"/>
    </source>
</evidence>
<evidence type="ECO:0000250" key="6">
    <source>
        <dbReference type="UniProtKB" id="P27395"/>
    </source>
</evidence>
<evidence type="ECO:0000250" key="7">
    <source>
        <dbReference type="UniProtKB" id="Q9Q6P4"/>
    </source>
</evidence>
<evidence type="ECO:0000255" key="8"/>
<evidence type="ECO:0000255" key="9">
    <source>
        <dbReference type="PROSITE-ProRule" id="PRU00859"/>
    </source>
</evidence>
<evidence type="ECO:0000255" key="10">
    <source>
        <dbReference type="PROSITE-ProRule" id="PRU00860"/>
    </source>
</evidence>
<evidence type="ECO:0000305" key="11"/>
<evidence type="ECO:0007829" key="12">
    <source>
        <dbReference type="PDB" id="4R8T"/>
    </source>
</evidence>
<reference key="1">
    <citation type="journal article" date="1987" name="Virology">
        <title>Partial nucleotide sequence of the Japanese encephalitis virus genome.</title>
        <authorList>
            <person name="McAda P.C."/>
            <person name="Mason P.W."/>
            <person name="Schmaljohn C.S."/>
            <person name="Dalrymple J.M."/>
            <person name="Mason T.L."/>
            <person name="Fournier M.J."/>
        </authorList>
    </citation>
    <scope>NUCLEOTIDE SEQUENCE [GENOMIC RNA]</scope>
</reference>
<protein>
    <recommendedName>
        <fullName>Genome polyprotein</fullName>
    </recommendedName>
    <component>
        <recommendedName>
            <fullName>Capsid protein C</fullName>
        </recommendedName>
        <alternativeName>
            <fullName>Core protein</fullName>
        </alternativeName>
    </component>
    <component>
        <recommendedName>
            <fullName>Protein prM</fullName>
        </recommendedName>
    </component>
    <component>
        <recommendedName>
            <fullName>Peptide pr</fullName>
        </recommendedName>
    </component>
    <component>
        <recommendedName>
            <fullName>Small envelope protein M</fullName>
        </recommendedName>
        <alternativeName>
            <fullName>Matrix protein</fullName>
        </alternativeName>
    </component>
    <component>
        <recommendedName>
            <fullName>Envelope protein E</fullName>
        </recommendedName>
    </component>
    <component>
        <recommendedName>
            <fullName>Non-structural protein 1</fullName>
            <shortName>NS1</shortName>
        </recommendedName>
    </component>
    <component>
        <recommendedName>
            <fullName>Non-structural protein 2A</fullName>
            <shortName>NS2A</shortName>
        </recommendedName>
    </component>
    <component>
        <recommendedName>
            <fullName>Serine protease subunit NS2B</fullName>
        </recommendedName>
        <alternativeName>
            <fullName>Flavivirin protease NS2B regulatory subunit</fullName>
        </alternativeName>
        <alternativeName>
            <fullName>Non-structural protein 2B</fullName>
        </alternativeName>
    </component>
    <component>
        <recommendedName>
            <fullName>Serine protease NS3</fullName>
            <ecNumber evidence="6">3.4.21.91</ecNumber>
            <ecNumber evidence="6">3.6.1.15</ecNumber>
            <ecNumber evidence="6">3.6.4.13</ecNumber>
        </recommendedName>
        <alternativeName>
            <fullName>Flavivirin protease NS3 catalytic subunit</fullName>
        </alternativeName>
        <alternativeName>
            <fullName>Non-structural protein 3</fullName>
        </alternativeName>
    </component>
</protein>
<feature type="chain" id="PRO_0000405200" description="Genome polyprotein">
    <location>
        <begin position="1" status="less than"/>
        <end position="1440" status="greater than"/>
    </location>
</feature>
<feature type="chain" id="PRO_0000037869" description="Capsid protein C" evidence="2">
    <location>
        <begin position="1" status="less than"/>
        <end position="31"/>
    </location>
</feature>
<feature type="propeptide" id="PRO_0000405201" description="ER anchor for the capsid protein C, removed in mature form by serine protease NS3" evidence="2">
    <location>
        <begin position="32"/>
        <end position="53"/>
    </location>
</feature>
<feature type="chain" id="PRO_0000405202" description="Protein prM" evidence="2">
    <location>
        <begin position="54"/>
        <end position="222"/>
    </location>
</feature>
<feature type="chain" id="PRO_0000037870" description="Peptide pr" evidence="2">
    <location>
        <begin position="54"/>
        <end position="146"/>
    </location>
</feature>
<feature type="chain" id="PRO_0000037871" description="Small envelope protein M" evidence="2">
    <location>
        <begin position="147"/>
        <end position="222"/>
    </location>
</feature>
<feature type="chain" id="PRO_0000037872" description="Envelope protein E" evidence="2">
    <location>
        <begin position="223"/>
        <end position="722"/>
    </location>
</feature>
<feature type="chain" id="PRO_0000037873" description="Non-structural protein 1" evidence="2">
    <location>
        <begin position="723"/>
        <end position="1074"/>
    </location>
</feature>
<feature type="chain" id="PRO_0000037874" description="Non-structural protein 2A" evidence="2">
    <location>
        <begin position="1075"/>
        <end position="1301"/>
    </location>
</feature>
<feature type="chain" id="PRO_0000037875" description="Serine protease subunit NS2B" evidence="2">
    <location>
        <begin position="1302"/>
        <end position="1432"/>
    </location>
</feature>
<feature type="chain" id="PRO_0000037876" description="Serine protease NS3" evidence="2">
    <location>
        <begin position="1433"/>
        <end position="1440" status="greater than"/>
    </location>
</feature>
<feature type="transmembrane region" description="Helical" evidence="8">
    <location>
        <begin position="36"/>
        <end position="56"/>
    </location>
</feature>
<feature type="topological domain" description="Extracellular" evidence="8">
    <location>
        <begin position="57"/>
        <end position="180"/>
    </location>
</feature>
<feature type="transmembrane region" description="Helical" evidence="8">
    <location>
        <begin position="181"/>
        <end position="201"/>
    </location>
</feature>
<feature type="topological domain" description="Cytoplasmic" evidence="8">
    <location>
        <begin position="202"/>
        <end position="207"/>
    </location>
</feature>
<feature type="transmembrane region" description="Helical" evidence="11">
    <location>
        <begin position="208"/>
        <end position="222"/>
    </location>
</feature>
<feature type="topological domain" description="Extracellular" evidence="8">
    <location>
        <begin position="223"/>
        <end position="674"/>
    </location>
</feature>
<feature type="transmembrane region" description="Helical" evidence="8">
    <location>
        <begin position="675"/>
        <end position="695"/>
    </location>
</feature>
<feature type="topological domain" description="Cytoplasmic" evidence="8">
    <location>
        <begin position="696"/>
        <end position="701"/>
    </location>
</feature>
<feature type="transmembrane region" description="Helical" evidence="8">
    <location>
        <begin position="702"/>
        <end position="722"/>
    </location>
</feature>
<feature type="topological domain" description="Extracellular" evidence="8">
    <location>
        <begin position="723"/>
        <end position="1147"/>
    </location>
</feature>
<feature type="transmembrane region" description="Helical" evidence="8">
    <location>
        <begin position="1148"/>
        <end position="1168"/>
    </location>
</feature>
<feature type="topological domain" description="Cytoplasmic" evidence="8">
    <location>
        <begin position="1169"/>
        <end position="1178"/>
    </location>
</feature>
<feature type="transmembrane region" description="Helical" evidence="8">
    <location>
        <begin position="1179"/>
        <end position="1199"/>
    </location>
</feature>
<feature type="topological domain" description="Lumenal" evidence="8">
    <location>
        <position position="1200"/>
    </location>
</feature>
<feature type="transmembrane region" description="Helical" evidence="8">
    <location>
        <begin position="1201"/>
        <end position="1221"/>
    </location>
</feature>
<feature type="topological domain" description="Cytoplasmic" evidence="8">
    <location>
        <begin position="1222"/>
        <end position="1237"/>
    </location>
</feature>
<feature type="transmembrane region" description="Helical" evidence="8">
    <location>
        <begin position="1238"/>
        <end position="1258"/>
    </location>
</feature>
<feature type="topological domain" description="Lumenal" evidence="8">
    <location>
        <begin position="1259"/>
        <end position="1269"/>
    </location>
</feature>
<feature type="transmembrane region" description="Helical" evidence="8">
    <location>
        <begin position="1270"/>
        <end position="1290"/>
    </location>
</feature>
<feature type="topological domain" description="Cytoplasmic" evidence="8">
    <location>
        <begin position="1291"/>
        <end position="1302"/>
    </location>
</feature>
<feature type="transmembrane region" description="Helical" evidence="8">
    <location>
        <begin position="1303"/>
        <end position="1323"/>
    </location>
</feature>
<feature type="topological domain" description="Lumenal" evidence="8">
    <location>
        <begin position="1324"/>
        <end position="1326"/>
    </location>
</feature>
<feature type="transmembrane region" description="Helical" evidence="8">
    <location>
        <begin position="1327"/>
        <end position="1347"/>
    </location>
</feature>
<feature type="topological domain" description="Cytoplasmic" evidence="8">
    <location>
        <begin position="1348"/>
        <end position="1404"/>
    </location>
</feature>
<feature type="intramembrane region" description="Helical" evidence="8">
    <location>
        <begin position="1405"/>
        <end position="1425"/>
    </location>
</feature>
<feature type="topological domain" description="Cytoplasmic" evidence="8">
    <location>
        <begin position="1426"/>
        <end position="1440" status="greater than"/>
    </location>
</feature>
<feature type="region of interest" description="Fusion peptide" evidence="4">
    <location>
        <begin position="320"/>
        <end position="333"/>
    </location>
</feature>
<feature type="region of interest" description="Interacts with and activates NS3 protease" evidence="9">
    <location>
        <begin position="1355"/>
        <end position="1394"/>
    </location>
</feature>
<feature type="site" description="Cleavage; by viral protease NS3" evidence="2">
    <location>
        <begin position="31"/>
        <end position="32"/>
    </location>
</feature>
<feature type="site" description="Cleavage; by host signal peptidase" evidence="2">
    <location>
        <begin position="53"/>
        <end position="54"/>
    </location>
</feature>
<feature type="site" description="Cleavage; by host furin" evidence="2">
    <location>
        <begin position="146"/>
        <end position="147"/>
    </location>
</feature>
<feature type="site" description="Cleavage; by host signal peptidase" evidence="2">
    <location>
        <begin position="222"/>
        <end position="223"/>
    </location>
</feature>
<feature type="site" description="Cleavage; by host signal peptidase" evidence="2">
    <location>
        <begin position="722"/>
        <end position="723"/>
    </location>
</feature>
<feature type="site" description="Cleavage; by host" evidence="2">
    <location>
        <begin position="1074"/>
        <end position="1075"/>
    </location>
</feature>
<feature type="site" description="Cleavage; by viral protease NS3" evidence="2">
    <location>
        <begin position="1301"/>
        <end position="1302"/>
    </location>
</feature>
<feature type="site" description="Cleavage; by autolysis" evidence="2">
    <location>
        <begin position="1432"/>
        <end position="1433"/>
    </location>
</feature>
<feature type="glycosylation site" description="N-linked (GlcNAc...) asparagine; by host" evidence="3">
    <location>
        <position position="68"/>
    </location>
</feature>
<feature type="glycosylation site" description="N-linked (GlcNAc...) asparagine; by host" evidence="8">
    <location>
        <position position="376"/>
    </location>
</feature>
<feature type="glycosylation site" description="N-linked (GlcNAc...) asparagine; by host" evidence="7">
    <location>
        <position position="852"/>
    </location>
</feature>
<feature type="glycosylation site" description="N-linked (GlcNAc...) asparagine; by host" evidence="7">
    <location>
        <position position="929"/>
    </location>
</feature>
<feature type="disulfide bond" evidence="7">
    <location>
        <begin position="225"/>
        <end position="252"/>
    </location>
</feature>
<feature type="disulfide bond" evidence="7">
    <location>
        <begin position="282"/>
        <end position="343"/>
    </location>
</feature>
<feature type="disulfide bond" evidence="2">
    <location>
        <begin position="282"/>
        <end position="338"/>
    </location>
</feature>
<feature type="disulfide bond" evidence="7">
    <location>
        <begin position="296"/>
        <end position="327"/>
    </location>
</feature>
<feature type="disulfide bond" evidence="2">
    <location>
        <begin position="314"/>
        <end position="343"/>
    </location>
</feature>
<feature type="disulfide bond" evidence="7">
    <location>
        <begin position="314"/>
        <end position="338"/>
    </location>
</feature>
<feature type="disulfide bond" evidence="7">
    <location>
        <begin position="412"/>
        <end position="509"/>
    </location>
</feature>
<feature type="disulfide bond" evidence="7">
    <location>
        <begin position="526"/>
        <end position="557"/>
    </location>
</feature>
<feature type="disulfide bond" evidence="7">
    <location>
        <begin position="726"/>
        <end position="737"/>
    </location>
</feature>
<feature type="disulfide bond" evidence="7">
    <location>
        <begin position="777"/>
        <end position="865"/>
    </location>
</feature>
<feature type="disulfide bond" evidence="7">
    <location>
        <begin position="901"/>
        <end position="945"/>
    </location>
</feature>
<feature type="disulfide bond" evidence="7">
    <location>
        <begin position="1002"/>
        <end position="1051"/>
    </location>
</feature>
<feature type="disulfide bond" evidence="7">
    <location>
        <begin position="1013"/>
        <end position="1034"/>
    </location>
</feature>
<feature type="disulfide bond" evidence="7">
    <location>
        <begin position="1035"/>
        <end position="1038"/>
    </location>
</feature>
<feature type="non-terminal residue">
    <location>
        <position position="1"/>
    </location>
</feature>
<feature type="non-terminal residue">
    <location>
        <position position="1440"/>
    </location>
</feature>
<feature type="strand" evidence="12">
    <location>
        <begin position="1352"/>
        <end position="1359"/>
    </location>
</feature>
<feature type="helix" evidence="12">
    <location>
        <begin position="1365"/>
        <end position="1368"/>
    </location>
</feature>
<sequence length="1440" mass="158185">SVAMKHLTSFKRELGTLIDAVNKRGRKQNKRGGNEGSIMWLASLAVVIACAGAMKLSNFQGKLLMTVNNTDIADVIVIPNPSKGENRCWVRAIDVGYMCEDTITYECPKLTMGNDPEDVDCWCDNQEVYVQYGRCTRTRHSKRSRRSVSVQTHGESSLVNKKEAWLDSTKATRYLMKTENWIVRNPGYAFLAAILGWMLGSNNGQRRWYFTILLLLVAPAYSFNCLGMGNRDFIEGASGATWVDLVLEGDSCLTIMANDKPTLDVRMINIEAVQLAEVRSYCYHASVTDISTVARCPTTGEAHNEKRADSSYVCKQGFTDRGWGNGCGLFGKGSIDTCAKFSCTSKAIGRTIQPENIKYEVGIFVHGTTTSENHGNYSAQVGASQAAKFTVTPNAPSITLKLGDYGEVTLDCEPRSGLNTEAFYVMTVGSKSFLVHREWFHDLALPWTPPSSTAWRNRELLMEFEEAHATKQSVVALGSQEGGLHQALAGAIVVEYSSSVKLTSGHLKCRLKMDKLALKGTTYGMCTEKFSFAKNPADTGHGTVVIELSYSGSDGPCKIPIVSVASLNDMTPVGRLVTVNPFVATSSANSKVLVEMEPPFGDSYIVVGRGDKQINHHWHKAGSTLGKAFSTTLKGAQRLAALGDTAWDFGSIGGVFNSIGKAVHQVFGGAFRTLFGGMSWITQGLMGALLLWMGVNARDRSIALAFLATGGVLVFLATNVHADTGCAIDITRKEMRCGSGIFVHNDVEAWVDRYKYLPETPRSLAKIVHKAHKEGVCGVRSVTRLEHQMWEAVRDELNVLLKENAVDLSVVVNKPVGRYRSAPKRLSMTQEKFEMGWKAWGKSILFAPELANSTFVVDGPETKECPDEHRAWNSIEIEDFGFGITSTRVWLKIREESTDECDGAIIGTAVKGHVAVHSDLSYWIESRYNDTWKLERAVFGEVKSCTWPETHTLWGDGVEESELIIPHTIAGPKSKHNRREGYKTQNQGPWDENGIVLDFDYCPGTKVTITEDCGKRGPSVRTTTDSGKLITDWCCRSCSLPPLRFRTENGCWYGMEIRPVRHDETTLVRSQVDAFNGEMVDPFQLGLLVMFLATQEVLRKRWTARLTIPAVLGALLVLMLGGITYTDLARYVVLVAAAFAEANSGGDVLHLALIAVFKIQPAFLVMNMLSTRWTNQENVVLVLGAAFFHLASVDLQIGVHGILNAAAIAWMIVRAITFPTTSSVTMPVLALLTPGMRALYLDTYRIILLVIGICSLLQERKKTMAKKKGAVLLGLALTSTGWFSPTTIAAGLMVCNPNKKRGWPATEFLSAVGLMFAIVGGLAELDIESMSIPFMLAGLMAVSYVVSGKATDMWLERAADISWEMDAAITGSSRRLDVKLDDDGDFHLIDDPGVPWKVWVLRMSCIGLAALTPWAIVPAAFGYWLTLKTTKRGGVFWDTP</sequence>
<accession>P14403</accession>
<accession>P08769</accession>
<proteinExistence type="evidence at protein level"/>
<organism>
    <name type="scientific">Japanese encephalitis virus (strain Nakayama)</name>
    <name type="common">JEV</name>
    <dbReference type="NCBI Taxonomy" id="11076"/>
    <lineage>
        <taxon>Viruses</taxon>
        <taxon>Riboviria</taxon>
        <taxon>Orthornavirae</taxon>
        <taxon>Kitrinoviricota</taxon>
        <taxon>Flasuviricetes</taxon>
        <taxon>Amarillovirales</taxon>
        <taxon>Flaviviridae</taxon>
        <taxon>Orthoflavivirus</taxon>
        <taxon>Orthoflavivirus japonicum</taxon>
    </lineage>
</organism>
<keyword id="KW-0002">3D-structure</keyword>
<keyword id="KW-0067">ATP-binding</keyword>
<keyword id="KW-0167">Capsid protein</keyword>
<keyword id="KW-1165">Clathrin-mediated endocytosis of virus by host</keyword>
<keyword id="KW-0165">Cleavage on pair of basic residues</keyword>
<keyword id="KW-1015">Disulfide bond</keyword>
<keyword id="KW-1170">Fusion of virus membrane with host endosomal membrane</keyword>
<keyword id="KW-1168">Fusion of virus membrane with host membrane</keyword>
<keyword id="KW-0325">Glycoprotein</keyword>
<keyword id="KW-0347">Helicase</keyword>
<keyword id="KW-1035">Host cytoplasm</keyword>
<keyword id="KW-1038">Host endoplasmic reticulum</keyword>
<keyword id="KW-1043">Host membrane</keyword>
<keyword id="KW-1048">Host nucleus</keyword>
<keyword id="KW-0945">Host-virus interaction</keyword>
<keyword id="KW-0378">Hydrolase</keyword>
<keyword id="KW-1090">Inhibition of host innate immune response by virus</keyword>
<keyword id="KW-1114">Inhibition of host interferon signaling pathway by virus</keyword>
<keyword id="KW-1105">Inhibition of host STAT1 by virus</keyword>
<keyword id="KW-1106">Inhibition of host STAT2 by virus</keyword>
<keyword id="KW-0922">Interferon antiviral system evasion</keyword>
<keyword id="KW-0472">Membrane</keyword>
<keyword id="KW-0511">Multifunctional enzyme</keyword>
<keyword id="KW-0547">Nucleotide-binding</keyword>
<keyword id="KW-0645">Protease</keyword>
<keyword id="KW-0964">Secreted</keyword>
<keyword id="KW-0720">Serine protease</keyword>
<keyword id="KW-0941">Suppressor of RNA silencing</keyword>
<keyword id="KW-0812">Transmembrane</keyword>
<keyword id="KW-1133">Transmembrane helix</keyword>
<keyword id="KW-1161">Viral attachment to host cell</keyword>
<keyword id="KW-0261">Viral envelope protein</keyword>
<keyword id="KW-0899">Viral immunoevasion</keyword>
<keyword id="KW-1162">Viral penetration into host cytoplasm</keyword>
<keyword id="KW-0946">Virion</keyword>
<keyword id="KW-1164">Virus endocytosis by host</keyword>
<keyword id="KW-1160">Virus entry into host cell</keyword>
<keyword id="KW-0862">Zinc</keyword>
<comment type="function">
    <molecule>Capsid protein C</molecule>
    <text evidence="5">Plays a role in virus budding by binding to the cell membrane and gathering the viral RNA into a nucleocapsid that forms the core of a mature virus particle. During virus entry, may induce genome penetration into the host cytoplasm after hemifusion induced by the surface proteins. Can migrate to the cell nucleus where it modulates host functions. Overcomes the anti-viral effects of host EXOC1 by sequestering and degrading the latter through the proteasome degradation pathway.</text>
</comment>
<comment type="function">
    <molecule>Capsid protein C</molecule>
    <text evidence="1">Inhibits RNA silencing by interfering with host Dicer.</text>
</comment>
<comment type="function">
    <molecule>Peptide pr</molecule>
    <text evidence="5">Prevents premature fusion activity of envelope proteins in trans-Golgi by binding to envelope protein E at pH 6.0. After virion release in extracellular space, gets dissociated from E dimers.</text>
</comment>
<comment type="function">
    <molecule>Protein prM</molecule>
    <text evidence="5">Acts as a chaperone for envelope protein E during intracellular virion assembly by masking and inactivating envelope protein E fusion peptide. prM is the only viral peptide matured by host furin in the trans-Golgi network probably to avoid catastrophic activation of the viral fusion activity in acidic Golgi compartment prior to virion release. prM-E cleavage is inefficient, and many virions are only partially matured. These uncleaved prM would play a role in immune evasion.</text>
</comment>
<comment type="function">
    <molecule>Small envelope protein M</molecule>
    <text evidence="5">May play a role in virus budding. Exerts cytotoxic effects by activating a mitochondrial apoptotic pathway through M ectodomain. May display a viroporin activity.</text>
</comment>
<comment type="function">
    <molecule>Envelope protein E</molecule>
    <text evidence="5">Binds to host cell surface receptor and mediates fusion between viral and cellular membranes. Envelope protein is synthesized in the endoplasmic reticulum in the form of heterodimer with protein prM. They play a role in virion budding in the ER, and the newly formed immature particle is covered with 60 spikes composed of heterodimer between precursor prM and envelope protein E. The virion is transported to the Golgi apparatus where the low pH causes dissociation of PrM-E heterodimers and formation of E homodimers. prM-E cleavage is inefficient, and many virions are only partially matured. These uncleaved prM would play a role in immune evasion.</text>
</comment>
<comment type="function">
    <molecule>Non-structural protein 1</molecule>
    <text evidence="7">Involved in immune evasion, pathogenesis and viral replication. Once cleaved off the polyprotein, is targeted to three destinations: the viral replication cycle, the plasma membrane and the extracellular compartment. Essential for viral replication. Required for formation of the replication complex and recruitment of other non-structural proteins to the ER-derived membrane structures. Excreted as a hexameric lipoparticle that plays a role against host immune response. Antagonizing the complement function. Binds to the host macrophages and dendritic cells. Inhibits signal transduction originating from Toll-like receptor 3 (TLR3).</text>
</comment>
<comment type="function">
    <molecule>Non-structural protein 2A</molecule>
    <text evidence="3">Component of the viral RNA replication complex that functions in virion assembly and antagonizes the host alpha/beta interferon antiviral response.</text>
</comment>
<comment type="function">
    <molecule>Serine protease subunit NS2B</molecule>
    <text evidence="5 9">Required cofactor for the serine protease function of NS3. May have membrane-destabilizing activity and form viroporins (By similarity).</text>
</comment>
<comment type="function">
    <molecule>Serine protease NS3</molecule>
    <text evidence="10">Displays three enzymatic activities: serine protease, NTPase and RNA helicase. NS3 serine protease, in association with NS2B, performs its autocleavage and cleaves the polyprotein at dibasic sites in the cytoplasm: C-prM, NS2A-NS2B, NS2B-NS3, NS3-NS4A, NS4A-2K and NS4B-NS5. NS3 RNA helicase binds RNA and unwinds dsRNA in the 3' to 5' direction.</text>
</comment>
<comment type="function">
    <text evidence="7">Non-structural protein 4A: Regulates the ATPase activity of the NS3 helicase activity. NS4A allows NS3 helicase to conserve energy during unwinding.</text>
</comment>
<comment type="function">
    <text evidence="5">Peptide 2k: Functions as a signal peptide for NS4B and is required for the interferon antagonism activity of the latter.</text>
</comment>
<comment type="function">
    <text evidence="7">Non-structural protein 4B: Induces the formation of ER-derived membrane vesicles where the viral replication takes place (By similarity). Inhibits interferon (IFN)-induced host STAT1 phosphorylation and nuclear translocation, thereby preventing the establishment of cellular antiviral state by blocking the IFN-alpha/beta pathway (By similarity). Inhibits STAT2 translocation in the nucleus after IFN-alpha treatment (By similarity).</text>
</comment>
<comment type="function">
    <text evidence="6 7">RNA-directed RNA polymerase NS5: Replicates the viral (+) and (-) RNA genome (By similarity). Performs the capping of genomes in the cytoplasm. NS5 methylates viral RNA cap at guanine N-7 and ribose 2'-O positions (By similarity). Besides its role in RNA genome replication, also prevents the establishment of cellular antiviral state by blocking the interferon-alpha/beta (IFN-alpha/beta) signaling pathway (By similarity). Inhibits host TYK2 and STAT2 phosphorylation, thereby preventing activation of JAK-STAT signaling pathway (By similarity).</text>
</comment>
<comment type="catalytic activity">
    <reaction>
        <text>Selective hydrolysis of -Xaa-Xaa-|-Yaa- bonds in which each of the Xaa can be either Arg or Lys and Yaa can be either Ser or Ala.</text>
        <dbReference type="EC" id="3.4.21.91"/>
    </reaction>
</comment>
<comment type="catalytic activity">
    <reaction>
        <text>a ribonucleoside 5'-triphosphate + H2O = a ribonucleoside 5'-diphosphate + phosphate + H(+)</text>
        <dbReference type="Rhea" id="RHEA:23680"/>
        <dbReference type="ChEBI" id="CHEBI:15377"/>
        <dbReference type="ChEBI" id="CHEBI:15378"/>
        <dbReference type="ChEBI" id="CHEBI:43474"/>
        <dbReference type="ChEBI" id="CHEBI:57930"/>
        <dbReference type="ChEBI" id="CHEBI:61557"/>
        <dbReference type="EC" id="3.6.1.15"/>
    </reaction>
</comment>
<comment type="catalytic activity">
    <reaction evidence="7">
        <text>ATP + H2O = ADP + phosphate + H(+)</text>
        <dbReference type="Rhea" id="RHEA:13065"/>
        <dbReference type="ChEBI" id="CHEBI:15377"/>
        <dbReference type="ChEBI" id="CHEBI:15378"/>
        <dbReference type="ChEBI" id="CHEBI:30616"/>
        <dbReference type="ChEBI" id="CHEBI:43474"/>
        <dbReference type="ChEBI" id="CHEBI:456216"/>
        <dbReference type="EC" id="3.6.4.13"/>
    </reaction>
</comment>
<comment type="cofactor">
    <cofactor>
        <name>Mn(2+)</name>
        <dbReference type="ChEBI" id="CHEBI:29035"/>
    </cofactor>
    <cofactor>
        <name>Mg(2+)</name>
        <dbReference type="ChEBI" id="CHEBI:18420"/>
    </cofactor>
    <text evidence="6">For RNA-directed RNA polymerase NS5 activity; Mn(2+) is more effective than Mg(2+).</text>
</comment>
<comment type="subunit">
    <molecule>Capsid protein C</molecule>
    <text evidence="5">Homodimer (By similarity). Interacts (via N-terminus) with host EXOC1 (via C-terminus); this interaction results in EXOC1 degradation through the proteasome degradation pathway (By similarity).</text>
</comment>
<comment type="subunit">
    <molecule>Protein prM</molecule>
    <text evidence="5">Forms heterodimers with envelope protein E in the endoplasmic reticulum and Golgi.</text>
</comment>
<comment type="subunit">
    <molecule>Envelope protein E</molecule>
    <text evidence="5">Homodimer; in the endoplasmic reticulum and Golgi (By similarity). Interacts with protein prM (By similarity). Interacts with non-structural protein 1 (By similarity).</text>
</comment>
<comment type="subunit">
    <molecule>Non-structural protein 1</molecule>
    <text evidence="7">Homodimer; Homohexamer when secreted (By similarity). Interacts with envelope protein E (By similarity). NS1 interacts with NS4B (By similarity). Interacts with host complement protein CFH; this interaction leads to the degradation of C3 (By similarity).</text>
</comment>
<comment type="subunit">
    <molecule>Non-structural protein 2A</molecule>
    <text evidence="1">Interacts (via N-terminus) with serine protease NS3.</text>
</comment>
<comment type="subunit">
    <molecule>Serine protease subunit NS2B</molecule>
    <text evidence="5">Forms a heterodimer with serine protease NS3 (By similarity). May form homooligomers (By similarity).</text>
</comment>
<comment type="subunit">
    <molecule>Serine protease NS3</molecule>
    <text evidence="5">Forms a heterodimer with NS2B (By similarity). Interacts with non-structural protein 2A (via N-terminus) (By similarity). Interacts with NS4B (By similarity). Interacts with unphosphorylated RNA-directed RNA polymerase NS5; this interaction stimulates RNA-directed RNA polymerase NS5 guanylyltransferase activity (By similarity).</text>
</comment>
<comment type="subcellular location">
    <molecule>Capsid protein C</molecule>
    <subcellularLocation>
        <location evidence="5">Virion</location>
    </subcellularLocation>
    <subcellularLocation>
        <location evidence="5">Host nucleus</location>
    </subcellularLocation>
    <subcellularLocation>
        <location evidence="2">Host cytoplasm</location>
    </subcellularLocation>
    <subcellularLocation>
        <location evidence="2">Host cytoplasm</location>
        <location evidence="2">Host perinuclear region</location>
    </subcellularLocation>
</comment>
<comment type="subcellular location">
    <molecule>Peptide pr</molecule>
    <subcellularLocation>
        <location evidence="5">Secreted</location>
    </subcellularLocation>
</comment>
<comment type="subcellular location">
    <molecule>Small envelope protein M</molecule>
    <subcellularLocation>
        <location evidence="1">Virion membrane</location>
        <topology evidence="1">Multi-pass membrane protein</topology>
    </subcellularLocation>
    <subcellularLocation>
        <location evidence="1">Host endoplasmic reticulum membrane</location>
        <topology evidence="8">Multi-pass membrane protein</topology>
    </subcellularLocation>
    <text evidence="1">ER membrane retention is mediated by the transmembrane domains.</text>
</comment>
<comment type="subcellular location">
    <molecule>Envelope protein E</molecule>
    <subcellularLocation>
        <location evidence="11">Virion membrane</location>
        <topology evidence="1">Multi-pass membrane protein</topology>
    </subcellularLocation>
    <subcellularLocation>
        <location evidence="1">Host endoplasmic reticulum membrane</location>
        <topology evidence="8">Multi-pass membrane protein</topology>
    </subcellularLocation>
    <text evidence="1">ER membrane retention is mediated by the transmembrane domains.</text>
</comment>
<comment type="subcellular location">
    <molecule>Non-structural protein 1</molecule>
    <subcellularLocation>
        <location evidence="5">Secreted</location>
    </subcellularLocation>
    <subcellularLocation>
        <location>Host endoplasmic reticulum membrane</location>
        <topology>Peripheral membrane protein</topology>
        <orientation evidence="5">Lumenal side</orientation>
    </subcellularLocation>
    <text evidence="7">Located in RE-derived vesicles hosting the replication complex.</text>
</comment>
<comment type="subcellular location">
    <molecule>Non-structural protein 2A</molecule>
    <subcellularLocation>
        <location evidence="3">Host endoplasmic reticulum membrane</location>
        <topology evidence="5">Multi-pass membrane protein</topology>
    </subcellularLocation>
</comment>
<comment type="subcellular location">
    <molecule>Serine protease subunit NS2B</molecule>
    <subcellularLocation>
        <location>Host endoplasmic reticulum membrane</location>
        <topology evidence="5">Multi-pass membrane protein</topology>
    </subcellularLocation>
</comment>
<comment type="subcellular location">
    <molecule>Serine protease NS3</molecule>
    <subcellularLocation>
        <location evidence="10">Host endoplasmic reticulum membrane</location>
        <topology evidence="10">Peripheral membrane protein</topology>
        <orientation evidence="10">Cytoplasmic side</orientation>
    </subcellularLocation>
    <text evidence="10">Remains non-covalently associated to serine protease subunit NS2B.</text>
</comment>
<comment type="domain">
    <text evidence="5">The transmembrane domains of the small envelope protein M and envelope protein E contain an endoplasmic reticulum retention signal.</text>
</comment>
<comment type="PTM">
    <molecule>Genome polyprotein</molecule>
    <text evidence="5">Specific enzymatic cleavages in vivo yield mature proteins. Cleavages in the lumen of endoplasmic reticulum are performed by host signal peptidase, whereas cleavages in the cytoplasmic side are performed by serine protease NS3. Signal cleavage at the 2K-4B site requires a prior NS3 protease-mediated cleavage at the 4A-2K site.</text>
</comment>
<comment type="PTM">
    <molecule>Protein prM</molecule>
    <text evidence="5">Cleaved in post-Golgi vesicles by a host furin, releasing the mature small envelope protein M, and peptide pr. This cleavage is incomplete as up to 30% of viral particles still carry uncleaved prM.</text>
</comment>
<comment type="PTM">
    <molecule>Envelope protein E</molecule>
    <text evidence="5">N-glycosylated.</text>
</comment>
<comment type="PTM">
    <molecule>Non-structural protein 1</molecule>
    <text evidence="5">N-glycosylated. The excreted form is glycosylated and this is required for efficient secretion of the protein from infected cells.</text>
</comment>
<comment type="PTM">
    <text evidence="5">RNA-directed RNA polymerase NS5: Phosphorylated on serines residues. This phosphorylation may trigger NS5 nuclear localization.</text>
</comment>
<dbReference type="EC" id="3.4.21.91" evidence="6"/>
<dbReference type="EC" id="3.6.1.15" evidence="6"/>
<dbReference type="EC" id="3.6.4.13" evidence="6"/>
<dbReference type="EMBL" id="M16574">
    <property type="protein sequence ID" value="AAA46251.1"/>
    <property type="molecule type" value="Genomic_RNA"/>
</dbReference>
<dbReference type="PIR" id="A27844">
    <property type="entry name" value="GNWVJF"/>
</dbReference>
<dbReference type="PDB" id="4R8T">
    <property type="method" value="X-ray"/>
    <property type="resolution" value="2.13 A"/>
    <property type="chains" value="A=1352-1369"/>
</dbReference>
<dbReference type="PDBsum" id="4R8T"/>
<dbReference type="SMR" id="P14403"/>
<dbReference type="ABCD" id="P14403">
    <property type="antibodies" value="1 sequenced antibody"/>
</dbReference>
<dbReference type="GO" id="GO:0005576">
    <property type="term" value="C:extracellular region"/>
    <property type="evidence" value="ECO:0007669"/>
    <property type="project" value="UniProtKB-SubCell"/>
</dbReference>
<dbReference type="GO" id="GO:0044167">
    <property type="term" value="C:host cell endoplasmic reticulum membrane"/>
    <property type="evidence" value="ECO:0007669"/>
    <property type="project" value="UniProtKB-SubCell"/>
</dbReference>
<dbReference type="GO" id="GO:0042025">
    <property type="term" value="C:host cell nucleus"/>
    <property type="evidence" value="ECO:0007669"/>
    <property type="project" value="UniProtKB-SubCell"/>
</dbReference>
<dbReference type="GO" id="GO:0044220">
    <property type="term" value="C:host cell perinuclear region of cytoplasm"/>
    <property type="evidence" value="ECO:0007669"/>
    <property type="project" value="UniProtKB-SubCell"/>
</dbReference>
<dbReference type="GO" id="GO:0016020">
    <property type="term" value="C:membrane"/>
    <property type="evidence" value="ECO:0007669"/>
    <property type="project" value="UniProtKB-KW"/>
</dbReference>
<dbReference type="GO" id="GO:0019028">
    <property type="term" value="C:viral capsid"/>
    <property type="evidence" value="ECO:0007669"/>
    <property type="project" value="UniProtKB-KW"/>
</dbReference>
<dbReference type="GO" id="GO:0019031">
    <property type="term" value="C:viral envelope"/>
    <property type="evidence" value="ECO:0007669"/>
    <property type="project" value="UniProtKB-KW"/>
</dbReference>
<dbReference type="GO" id="GO:0055036">
    <property type="term" value="C:virion membrane"/>
    <property type="evidence" value="ECO:0007669"/>
    <property type="project" value="UniProtKB-SubCell"/>
</dbReference>
<dbReference type="GO" id="GO:0005524">
    <property type="term" value="F:ATP binding"/>
    <property type="evidence" value="ECO:0007669"/>
    <property type="project" value="UniProtKB-KW"/>
</dbReference>
<dbReference type="GO" id="GO:0016887">
    <property type="term" value="F:ATP hydrolysis activity"/>
    <property type="evidence" value="ECO:0007669"/>
    <property type="project" value="RHEA"/>
</dbReference>
<dbReference type="GO" id="GO:0003725">
    <property type="term" value="F:double-stranded RNA binding"/>
    <property type="evidence" value="ECO:0007669"/>
    <property type="project" value="InterPro"/>
</dbReference>
<dbReference type="GO" id="GO:0046983">
    <property type="term" value="F:protein dimerization activity"/>
    <property type="evidence" value="ECO:0007669"/>
    <property type="project" value="InterPro"/>
</dbReference>
<dbReference type="GO" id="GO:0003724">
    <property type="term" value="F:RNA helicase activity"/>
    <property type="evidence" value="ECO:0007669"/>
    <property type="project" value="UniProtKB-EC"/>
</dbReference>
<dbReference type="GO" id="GO:0004252">
    <property type="term" value="F:serine-type endopeptidase activity"/>
    <property type="evidence" value="ECO:0007669"/>
    <property type="project" value="InterPro"/>
</dbReference>
<dbReference type="GO" id="GO:0005198">
    <property type="term" value="F:structural molecule activity"/>
    <property type="evidence" value="ECO:0007669"/>
    <property type="project" value="InterPro"/>
</dbReference>
<dbReference type="GO" id="GO:0075512">
    <property type="term" value="P:clathrin-dependent endocytosis of virus by host cell"/>
    <property type="evidence" value="ECO:0007669"/>
    <property type="project" value="UniProtKB-KW"/>
</dbReference>
<dbReference type="GO" id="GO:0039654">
    <property type="term" value="P:fusion of virus membrane with host endosome membrane"/>
    <property type="evidence" value="ECO:0007669"/>
    <property type="project" value="UniProtKB-KW"/>
</dbReference>
<dbReference type="GO" id="GO:0006508">
    <property type="term" value="P:proteolysis"/>
    <property type="evidence" value="ECO:0007669"/>
    <property type="project" value="UniProtKB-KW"/>
</dbReference>
<dbReference type="GO" id="GO:0052170">
    <property type="term" value="P:symbiont-mediated suppression of host innate immune response"/>
    <property type="evidence" value="ECO:0007669"/>
    <property type="project" value="UniProtKB-KW"/>
</dbReference>
<dbReference type="GO" id="GO:0039563">
    <property type="term" value="P:symbiont-mediated suppression of host JAK-STAT cascade via inhibition of STAT1 activity"/>
    <property type="evidence" value="ECO:0007669"/>
    <property type="project" value="UniProtKB-KW"/>
</dbReference>
<dbReference type="GO" id="GO:0039564">
    <property type="term" value="P:symbiont-mediated suppression of host JAK-STAT cascade via inhibition of STAT2 activity"/>
    <property type="evidence" value="ECO:0007669"/>
    <property type="project" value="UniProtKB-KW"/>
</dbReference>
<dbReference type="GO" id="GO:0039502">
    <property type="term" value="P:symbiont-mediated suppression of host type I interferon-mediated signaling pathway"/>
    <property type="evidence" value="ECO:0007669"/>
    <property type="project" value="UniProtKB-KW"/>
</dbReference>
<dbReference type="GO" id="GO:0019062">
    <property type="term" value="P:virion attachment to host cell"/>
    <property type="evidence" value="ECO:0007669"/>
    <property type="project" value="UniProtKB-KW"/>
</dbReference>
<dbReference type="CDD" id="cd12149">
    <property type="entry name" value="Flavi_E_C"/>
    <property type="match status" value="1"/>
</dbReference>
<dbReference type="CDD" id="cd17038">
    <property type="entry name" value="Flavi_M"/>
    <property type="match status" value="1"/>
</dbReference>
<dbReference type="FunFam" id="1.20.1280.260:FF:000001">
    <property type="entry name" value="Envelope glycoprotein"/>
    <property type="match status" value="1"/>
</dbReference>
<dbReference type="FunFam" id="2.60.40.350:FF:000001">
    <property type="entry name" value="Envelope glycoprotein"/>
    <property type="match status" value="1"/>
</dbReference>
<dbReference type="FunFam" id="2.60.260.50:FF:000001">
    <property type="entry name" value="Genome polyprotein"/>
    <property type="match status" value="1"/>
</dbReference>
<dbReference type="Gene3D" id="1.10.10.930">
    <property type="match status" value="1"/>
</dbReference>
<dbReference type="Gene3D" id="1.20.1280.260">
    <property type="match status" value="1"/>
</dbReference>
<dbReference type="Gene3D" id="2.40.10.120">
    <property type="match status" value="1"/>
</dbReference>
<dbReference type="Gene3D" id="2.60.40.350">
    <property type="match status" value="1"/>
</dbReference>
<dbReference type="Gene3D" id="1.10.8.970">
    <property type="entry name" value="Flavivirus envelope glycoprotein M-like"/>
    <property type="match status" value="1"/>
</dbReference>
<dbReference type="Gene3D" id="2.60.260.50">
    <property type="entry name" value="Flavivirus polyprotein propeptide domain"/>
    <property type="match status" value="1"/>
</dbReference>
<dbReference type="Gene3D" id="2.60.98.10">
    <property type="entry name" value="Tick-borne Encephalitis virus Glycoprotein, domain 1"/>
    <property type="match status" value="1"/>
</dbReference>
<dbReference type="Gene3D" id="3.30.67.10">
    <property type="entry name" value="Viral Envelope Glycoprotein, domain 2"/>
    <property type="match status" value="1"/>
</dbReference>
<dbReference type="Gene3D" id="3.30.387.10">
    <property type="entry name" value="Viral Envelope Glycoprotein, domain 3"/>
    <property type="match status" value="1"/>
</dbReference>
<dbReference type="InterPro" id="IPR000069">
    <property type="entry name" value="Env_glycoprot_M_flavivir"/>
</dbReference>
<dbReference type="InterPro" id="IPR038302">
    <property type="entry name" value="Env_glycoprot_M_sf_flavivir"/>
</dbReference>
<dbReference type="InterPro" id="IPR013755">
    <property type="entry name" value="Flav_gly_cen_dom_subdom1"/>
</dbReference>
<dbReference type="InterPro" id="IPR001122">
    <property type="entry name" value="Flavi_capsidC"/>
</dbReference>
<dbReference type="InterPro" id="IPR037172">
    <property type="entry name" value="Flavi_capsidC_sf"/>
</dbReference>
<dbReference type="InterPro" id="IPR027287">
    <property type="entry name" value="Flavi_E_Ig-like"/>
</dbReference>
<dbReference type="InterPro" id="IPR026470">
    <property type="entry name" value="Flavi_E_Stem/Anchor_dom"/>
</dbReference>
<dbReference type="InterPro" id="IPR038345">
    <property type="entry name" value="Flavi_E_Stem/Anchor_dom_sf"/>
</dbReference>
<dbReference type="InterPro" id="IPR011998">
    <property type="entry name" value="Flavi_Glycoprot_E_cen/dimer"/>
</dbReference>
<dbReference type="InterPro" id="IPR001157">
    <property type="entry name" value="Flavi_NS1"/>
</dbReference>
<dbReference type="InterPro" id="IPR000752">
    <property type="entry name" value="Flavi_NS2A"/>
</dbReference>
<dbReference type="InterPro" id="IPR000487">
    <property type="entry name" value="Flavi_NS2B"/>
</dbReference>
<dbReference type="InterPro" id="IPR002535">
    <property type="entry name" value="Flavi_propep"/>
</dbReference>
<dbReference type="InterPro" id="IPR038688">
    <property type="entry name" value="Flavi_propep_sf"/>
</dbReference>
<dbReference type="InterPro" id="IPR000336">
    <property type="entry name" value="Flavivir/Alphavir_Ig-like_sf"/>
</dbReference>
<dbReference type="InterPro" id="IPR036253">
    <property type="entry name" value="Glycoprot_cen/dimer_sf"/>
</dbReference>
<dbReference type="InterPro" id="IPR038055">
    <property type="entry name" value="Glycoprot_E_dimer_dom"/>
</dbReference>
<dbReference type="InterPro" id="IPR013756">
    <property type="entry name" value="GlyE_cen_dom_subdom2"/>
</dbReference>
<dbReference type="InterPro" id="IPR014756">
    <property type="entry name" value="Ig_E-set"/>
</dbReference>
<dbReference type="NCBIfam" id="TIGR04240">
    <property type="entry name" value="flavi_E_stem"/>
    <property type="match status" value="1"/>
</dbReference>
<dbReference type="Pfam" id="PF01003">
    <property type="entry name" value="Flavi_capsid"/>
    <property type="match status" value="1"/>
</dbReference>
<dbReference type="Pfam" id="PF21659">
    <property type="entry name" value="Flavi_E_stem"/>
    <property type="match status" value="1"/>
</dbReference>
<dbReference type="Pfam" id="PF02832">
    <property type="entry name" value="Flavi_glycop_C"/>
    <property type="match status" value="1"/>
</dbReference>
<dbReference type="Pfam" id="PF00869">
    <property type="entry name" value="Flavi_glycoprot"/>
    <property type="match status" value="1"/>
</dbReference>
<dbReference type="Pfam" id="PF01004">
    <property type="entry name" value="Flavi_M"/>
    <property type="match status" value="1"/>
</dbReference>
<dbReference type="Pfam" id="PF00948">
    <property type="entry name" value="Flavi_NS1"/>
    <property type="match status" value="1"/>
</dbReference>
<dbReference type="Pfam" id="PF01005">
    <property type="entry name" value="Flavi_NS2A"/>
    <property type="match status" value="1"/>
</dbReference>
<dbReference type="Pfam" id="PF01002">
    <property type="entry name" value="Flavi_NS2B"/>
    <property type="match status" value="1"/>
</dbReference>
<dbReference type="Pfam" id="PF01570">
    <property type="entry name" value="Flavi_propep"/>
    <property type="match status" value="1"/>
</dbReference>
<dbReference type="SUPFAM" id="SSF81296">
    <property type="entry name" value="E set domains"/>
    <property type="match status" value="1"/>
</dbReference>
<dbReference type="SUPFAM" id="SSF56983">
    <property type="entry name" value="Viral glycoprotein, central and dimerisation domains"/>
    <property type="match status" value="1"/>
</dbReference>
<dbReference type="PROSITE" id="PS51527">
    <property type="entry name" value="FLAVIVIRUS_NS2B"/>
    <property type="match status" value="1"/>
</dbReference>
<organismHost>
    <name type="scientific">Ardeidae</name>
    <name type="common">herons</name>
    <dbReference type="NCBI Taxonomy" id="8899"/>
</organismHost>
<organismHost>
    <name type="scientific">Bos taurus</name>
    <name type="common">Bovine</name>
    <dbReference type="NCBI Taxonomy" id="9913"/>
</organismHost>
<organismHost>
    <name type="scientific">Culex gelidus</name>
    <dbReference type="NCBI Taxonomy" id="308713"/>
</organismHost>
<organismHost>
    <name type="scientific">Culex tritaeniorhynchus</name>
    <name type="common">Mosquito</name>
    <dbReference type="NCBI Taxonomy" id="7178"/>
</organismHost>
<organismHost>
    <name type="scientific">Equus caballus</name>
    <name type="common">Horse</name>
    <dbReference type="NCBI Taxonomy" id="9796"/>
</organismHost>
<organismHost>
    <name type="scientific">Homo sapiens</name>
    <name type="common">Human</name>
    <dbReference type="NCBI Taxonomy" id="9606"/>
</organismHost>
<organismHost>
    <name type="scientific">Sus scrofa</name>
    <name type="common">Pig</name>
    <dbReference type="NCBI Taxonomy" id="9823"/>
</organismHost>
<name>POLG_JAEVN</name>